<feature type="chain" id="PRO_0000402038" description="Methylthioribose-1-phosphate isomerase">
    <location>
        <begin position="1"/>
        <end position="382"/>
    </location>
</feature>
<feature type="active site" description="Proton donor" evidence="1">
    <location>
        <position position="257"/>
    </location>
</feature>
<feature type="site" description="Transition state stabilizer" evidence="1">
    <location>
        <position position="175"/>
    </location>
</feature>
<keyword id="KW-0028">Amino-acid biosynthesis</keyword>
<keyword id="KW-0963">Cytoplasm</keyword>
<keyword id="KW-0413">Isomerase</keyword>
<keyword id="KW-0486">Methionine biosynthesis</keyword>
<keyword id="KW-0539">Nucleus</keyword>
<keyword id="KW-1185">Reference proteome</keyword>
<reference key="1">
    <citation type="journal article" date="2011" name="PLoS Genet.">
        <title>Comparative genomic analysis of human fungal pathogens causing paracoccidioidomycosis.</title>
        <authorList>
            <person name="Desjardins C.A."/>
            <person name="Champion M.D."/>
            <person name="Holder J.W."/>
            <person name="Muszewska A."/>
            <person name="Goldberg J."/>
            <person name="Bailao A.M."/>
            <person name="Brigido M.M."/>
            <person name="Ferreira M.E."/>
            <person name="Garcia A.M."/>
            <person name="Grynberg M."/>
            <person name="Gujja S."/>
            <person name="Heiman D.I."/>
            <person name="Henn M.R."/>
            <person name="Kodira C.D."/>
            <person name="Leon-Narvaez H."/>
            <person name="Longo L.V.G."/>
            <person name="Ma L.-J."/>
            <person name="Malavazi I."/>
            <person name="Matsuo A.L."/>
            <person name="Morais F.V."/>
            <person name="Pereira M."/>
            <person name="Rodriguez-Brito S."/>
            <person name="Sakthikumar S."/>
            <person name="Salem-Izacc S.M."/>
            <person name="Sykes S.M."/>
            <person name="Teixeira M.M."/>
            <person name="Vallejo M.C."/>
            <person name="Walter M.E."/>
            <person name="Yandava C."/>
            <person name="Young S."/>
            <person name="Zeng Q."/>
            <person name="Zucker J."/>
            <person name="Felipe M.S."/>
            <person name="Goldman G.H."/>
            <person name="Haas B.J."/>
            <person name="McEwen J.G."/>
            <person name="Nino-Vega G."/>
            <person name="Puccia R."/>
            <person name="San-Blas G."/>
            <person name="Soares C.M."/>
            <person name="Birren B.W."/>
            <person name="Cuomo C.A."/>
        </authorList>
    </citation>
    <scope>NUCLEOTIDE SEQUENCE [LARGE SCALE GENOMIC DNA]</scope>
    <source>
        <strain>Pb18</strain>
    </source>
</reference>
<proteinExistence type="inferred from homology"/>
<sequence length="382" mass="40893">MPLIAISYSHGKLSILNQLFLPHQTTYDPIYSACDAWHAIHDMRVRGAPAIAIVAALSLAVELYDLIQKGKLSDQAKEVEIFIREKLEYIASSRPTAVNLVEAAGRLGKIVVARSCGEGVTGREVAEEYIRAAEKMLEDDVKDNRGIGEFGAKWIMKQAIDGAEGKGKVAVLTHCNTGSLATAGYGTALGVIRSLHAANSLKHAYCTETRPYNQGSRLTAYELVHDNIPATLITDSMAAALLAHKSAGVGAIVVGADRVAANGDTANKIGTYGLAVLAKHHGVKFLVAAPRTTIDMNTKSGEGIAIEERPRQEMTRIRGPRVGGEQDGLGAMETITVAADGIDVWNPAFDVTPASLIDGIITEIGVVEKDRDGEFHLERVFE</sequence>
<name>MTNA_PARBD</name>
<accession>C1G9Q3</accession>
<comment type="function">
    <text evidence="1">Catalyzes the interconversion of methylthioribose-1-phosphate (MTR-1-P) into methylthioribulose-1-phosphate (MTRu-1-P).</text>
</comment>
<comment type="catalytic activity">
    <reaction evidence="1">
        <text>5-(methylsulfanyl)-alpha-D-ribose 1-phosphate = 5-(methylsulfanyl)-D-ribulose 1-phosphate</text>
        <dbReference type="Rhea" id="RHEA:19989"/>
        <dbReference type="ChEBI" id="CHEBI:58533"/>
        <dbReference type="ChEBI" id="CHEBI:58548"/>
        <dbReference type="EC" id="5.3.1.23"/>
    </reaction>
</comment>
<comment type="pathway">
    <text evidence="1">Amino-acid biosynthesis; L-methionine biosynthesis via salvage pathway; L-methionine from S-methyl-5-thio-alpha-D-ribose 1-phosphate: step 1/6.</text>
</comment>
<comment type="subcellular location">
    <subcellularLocation>
        <location evidence="1">Cytoplasm</location>
    </subcellularLocation>
    <subcellularLocation>
        <location evidence="1">Nucleus</location>
    </subcellularLocation>
</comment>
<comment type="similarity">
    <text evidence="1">Belongs to the eIF-2B alpha/beta/delta subunits family. MtnA subfamily.</text>
</comment>
<protein>
    <recommendedName>
        <fullName evidence="1">Methylthioribose-1-phosphate isomerase</fullName>
        <shortName evidence="1">M1Pi</shortName>
        <shortName evidence="1">MTR-1-P isomerase</shortName>
        <ecNumber evidence="1">5.3.1.23</ecNumber>
    </recommendedName>
    <alternativeName>
        <fullName evidence="1">S-methyl-5-thioribose-1-phosphate isomerase</fullName>
    </alternativeName>
    <alternativeName>
        <fullName evidence="1">Translation initiation factor eIF-2B subunit alpha/beta/delta-like protein</fullName>
    </alternativeName>
</protein>
<organism>
    <name type="scientific">Paracoccidioides brasiliensis (strain Pb18)</name>
    <dbReference type="NCBI Taxonomy" id="502780"/>
    <lineage>
        <taxon>Eukaryota</taxon>
        <taxon>Fungi</taxon>
        <taxon>Dikarya</taxon>
        <taxon>Ascomycota</taxon>
        <taxon>Pezizomycotina</taxon>
        <taxon>Eurotiomycetes</taxon>
        <taxon>Eurotiomycetidae</taxon>
        <taxon>Onygenales</taxon>
        <taxon>Ajellomycetaceae</taxon>
        <taxon>Paracoccidioides</taxon>
    </lineage>
</organism>
<evidence type="ECO:0000255" key="1">
    <source>
        <dbReference type="HAMAP-Rule" id="MF_03119"/>
    </source>
</evidence>
<dbReference type="EC" id="5.3.1.23" evidence="1"/>
<dbReference type="EMBL" id="KN275960">
    <property type="protein sequence ID" value="EEH47905.1"/>
    <property type="molecule type" value="Genomic_DNA"/>
</dbReference>
<dbReference type="RefSeq" id="XP_010759673.1">
    <property type="nucleotide sequence ID" value="XM_010761371.1"/>
</dbReference>
<dbReference type="SMR" id="C1G9Q3"/>
<dbReference type="FunCoup" id="C1G9Q3">
    <property type="interactions" value="677"/>
</dbReference>
<dbReference type="STRING" id="502780.C1G9Q3"/>
<dbReference type="GeneID" id="22583197"/>
<dbReference type="KEGG" id="pbn:PADG_03989"/>
<dbReference type="VEuPathDB" id="FungiDB:PADG_03989"/>
<dbReference type="eggNOG" id="KOG1468">
    <property type="taxonomic scope" value="Eukaryota"/>
</dbReference>
<dbReference type="HOGENOM" id="CLU_016218_1_3_1"/>
<dbReference type="InParanoid" id="C1G9Q3"/>
<dbReference type="OMA" id="CETRPLN"/>
<dbReference type="OrthoDB" id="36798at33183"/>
<dbReference type="UniPathway" id="UPA00904">
    <property type="reaction ID" value="UER00874"/>
</dbReference>
<dbReference type="Proteomes" id="UP000001628">
    <property type="component" value="Unassembled WGS sequence"/>
</dbReference>
<dbReference type="GO" id="GO:0005737">
    <property type="term" value="C:cytoplasm"/>
    <property type="evidence" value="ECO:0007669"/>
    <property type="project" value="UniProtKB-SubCell"/>
</dbReference>
<dbReference type="GO" id="GO:0005634">
    <property type="term" value="C:nucleus"/>
    <property type="evidence" value="ECO:0007669"/>
    <property type="project" value="UniProtKB-SubCell"/>
</dbReference>
<dbReference type="GO" id="GO:0046523">
    <property type="term" value="F:S-methyl-5-thioribose-1-phosphate isomerase activity"/>
    <property type="evidence" value="ECO:0007669"/>
    <property type="project" value="UniProtKB-UniRule"/>
</dbReference>
<dbReference type="GO" id="GO:0019509">
    <property type="term" value="P:L-methionine salvage from methylthioadenosine"/>
    <property type="evidence" value="ECO:0007669"/>
    <property type="project" value="UniProtKB-UniRule"/>
</dbReference>
<dbReference type="FunFam" id="1.20.120.420:FF:000003">
    <property type="entry name" value="Methylthioribose-1-phosphate isomerase"/>
    <property type="match status" value="1"/>
</dbReference>
<dbReference type="FunFam" id="3.40.50.10470:FF:000010">
    <property type="entry name" value="Methylthioribose-1-phosphate isomerase"/>
    <property type="match status" value="1"/>
</dbReference>
<dbReference type="Gene3D" id="1.20.120.420">
    <property type="entry name" value="translation initiation factor eif-2b, domain 1"/>
    <property type="match status" value="1"/>
</dbReference>
<dbReference type="Gene3D" id="3.40.50.10470">
    <property type="entry name" value="Translation initiation factor eif-2b, domain 2"/>
    <property type="match status" value="1"/>
</dbReference>
<dbReference type="HAMAP" id="MF_01678">
    <property type="entry name" value="Salvage_MtnA"/>
    <property type="match status" value="1"/>
</dbReference>
<dbReference type="InterPro" id="IPR000649">
    <property type="entry name" value="IF-2B-related"/>
</dbReference>
<dbReference type="InterPro" id="IPR005251">
    <property type="entry name" value="IF-M1Pi"/>
</dbReference>
<dbReference type="InterPro" id="IPR042529">
    <property type="entry name" value="IF_2B-like_C"/>
</dbReference>
<dbReference type="InterPro" id="IPR011559">
    <property type="entry name" value="Initiation_fac_2B_a/b/d"/>
</dbReference>
<dbReference type="InterPro" id="IPR027363">
    <property type="entry name" value="M1Pi_N"/>
</dbReference>
<dbReference type="InterPro" id="IPR037171">
    <property type="entry name" value="NagB/RpiA_transferase-like"/>
</dbReference>
<dbReference type="NCBIfam" id="TIGR00524">
    <property type="entry name" value="eIF-2B_rel"/>
    <property type="match status" value="1"/>
</dbReference>
<dbReference type="NCBIfam" id="NF004326">
    <property type="entry name" value="PRK05720.1"/>
    <property type="match status" value="1"/>
</dbReference>
<dbReference type="NCBIfam" id="TIGR00512">
    <property type="entry name" value="salvage_mtnA"/>
    <property type="match status" value="1"/>
</dbReference>
<dbReference type="PANTHER" id="PTHR43475">
    <property type="entry name" value="METHYLTHIORIBOSE-1-PHOSPHATE ISOMERASE"/>
    <property type="match status" value="1"/>
</dbReference>
<dbReference type="PANTHER" id="PTHR43475:SF1">
    <property type="entry name" value="METHYLTHIORIBOSE-1-PHOSPHATE ISOMERASE"/>
    <property type="match status" value="1"/>
</dbReference>
<dbReference type="Pfam" id="PF01008">
    <property type="entry name" value="IF-2B"/>
    <property type="match status" value="1"/>
</dbReference>
<dbReference type="SUPFAM" id="SSF100950">
    <property type="entry name" value="NagB/RpiA/CoA transferase-like"/>
    <property type="match status" value="1"/>
</dbReference>
<gene>
    <name evidence="1" type="primary">MRI1</name>
    <name type="ORF">PADG_03989</name>
</gene>